<name>PPP6_MOUSE</name>
<comment type="function">
    <text evidence="1 5">Catalytic subunit of protein phosphatase 6 (PP6) (PubMed:32474700). PP6 is a component of a signaling pathway regulating cell cycle progression in response to IL2 receptor stimulation (By similarity). N-terminal domain restricts G1 to S phase progression in cancer cells, in part through control of cyclin D13 During mitosis, regulates spindle positioning (By similarity). Down-regulates MAP3K7 kinase activation of the IL1 signaling pathway by dephosphorylation of MAP3K7 (By similarity). Acts as a regulator of innate immunity by mediating dephosphorylation CGAS, STING1 and RIGI (PubMed:32474700). Also participates in the innate immune defense against viruses by desphosphorylating RIGI, an essential step that triggers RIGI-mediated signaling activation (By similarity). Also regulates innate immunity by acting as a negative regulator of the cGAS-STING pathway: mediates dephosphorylation and inactivation of CGAS and STING1 (PubMed:32474700). CGAS dephosphorylation at 'Ser-420' impairs its ability to bind GTP, thereby inactivating it (PubMed:32474700).</text>
</comment>
<comment type="catalytic activity">
    <reaction evidence="5">
        <text>O-phospho-L-seryl-[protein] + H2O = L-seryl-[protein] + phosphate</text>
        <dbReference type="Rhea" id="RHEA:20629"/>
        <dbReference type="Rhea" id="RHEA-COMP:9863"/>
        <dbReference type="Rhea" id="RHEA-COMP:11604"/>
        <dbReference type="ChEBI" id="CHEBI:15377"/>
        <dbReference type="ChEBI" id="CHEBI:29999"/>
        <dbReference type="ChEBI" id="CHEBI:43474"/>
        <dbReference type="ChEBI" id="CHEBI:83421"/>
        <dbReference type="EC" id="3.1.3.16"/>
    </reaction>
</comment>
<comment type="catalytic activity">
    <reaction evidence="1">
        <text>O-phospho-L-threonyl-[protein] + H2O = L-threonyl-[protein] + phosphate</text>
        <dbReference type="Rhea" id="RHEA:47004"/>
        <dbReference type="Rhea" id="RHEA-COMP:11060"/>
        <dbReference type="Rhea" id="RHEA-COMP:11605"/>
        <dbReference type="ChEBI" id="CHEBI:15377"/>
        <dbReference type="ChEBI" id="CHEBI:30013"/>
        <dbReference type="ChEBI" id="CHEBI:43474"/>
        <dbReference type="ChEBI" id="CHEBI:61977"/>
        <dbReference type="EC" id="3.1.3.16"/>
    </reaction>
</comment>
<comment type="cofactor">
    <cofactor evidence="2">
        <name>Mn(2+)</name>
        <dbReference type="ChEBI" id="CHEBI:29035"/>
    </cofactor>
    <text evidence="2">Binds 2 manganese ions per subunit.</text>
</comment>
<comment type="subunit">
    <text evidence="1">Protein phosphatase 6 (PP6) holoenzyme is proposed to be a heterotrimeric complex formed by the catalytic subunit, a SAPS domain-containing subunit (PP6R) and an ankyrin repeat-domain containing regulatory subunit (ARS). Interacts with subunits PPP6R1, PPP6R2 and PPP6R3. Interacts with subunit ANKRD28. Interacts with IGBP1. Interacts with MAP3K7. Interacts with NFKBIE. Interacts with TRIM14 and WRNIP1; these interactions positively regulate the RIG-I signaling pathway.</text>
</comment>
<comment type="subcellular location">
    <subcellularLocation>
        <location evidence="1">Mitochondrion</location>
    </subcellularLocation>
    <subcellularLocation>
        <location evidence="1">Cytoplasm</location>
    </subcellularLocation>
</comment>
<comment type="tissue specificity">
    <text evidence="3">Ubiquitously expressed in all tissues tested with strongest expression in lung, spleen, liver, kidney and brain. Weaker expression observed in bladder, pancreas, heart and skeletal muscle.</text>
</comment>
<comment type="disruption phenotype">
    <text evidence="4">Embryonic lethality (PubMed:26868000). Embryos are apparently normal in blastocysts, but degenerate by E7.5 and display clear developmental defects at E8.5, suggesting that mutant embryos die after implantation (PubMed:26868000).</text>
</comment>
<comment type="similarity">
    <text evidence="7">Belongs to the PPP phosphatase family. PP-6 (PP-V) subfamily.</text>
</comment>
<keyword id="KW-0007">Acetylation</keyword>
<keyword id="KW-0131">Cell cycle</keyword>
<keyword id="KW-0963">Cytoplasm</keyword>
<keyword id="KW-0378">Hydrolase</keyword>
<keyword id="KW-0391">Immunity</keyword>
<keyword id="KW-0399">Innate immunity</keyword>
<keyword id="KW-0464">Manganese</keyword>
<keyword id="KW-0479">Metal-binding</keyword>
<keyword id="KW-0496">Mitochondrion</keyword>
<keyword id="KW-0904">Protein phosphatase</keyword>
<keyword id="KW-1185">Reference proteome</keyword>
<protein>
    <recommendedName>
        <fullName evidence="7">Serine/threonine-protein phosphatase 6 catalytic subunit</fullName>
        <shortName evidence="6">PP6C</shortName>
        <ecNumber evidence="5">3.1.3.16</ecNumber>
    </recommendedName>
</protein>
<accession>Q9CQR6</accession>
<accession>A2ASL7</accession>
<reference key="1">
    <citation type="journal article" date="2005" name="Science">
        <title>The transcriptional landscape of the mammalian genome.</title>
        <authorList>
            <person name="Carninci P."/>
            <person name="Kasukawa T."/>
            <person name="Katayama S."/>
            <person name="Gough J."/>
            <person name="Frith M.C."/>
            <person name="Maeda N."/>
            <person name="Oyama R."/>
            <person name="Ravasi T."/>
            <person name="Lenhard B."/>
            <person name="Wells C."/>
            <person name="Kodzius R."/>
            <person name="Shimokawa K."/>
            <person name="Bajic V.B."/>
            <person name="Brenner S.E."/>
            <person name="Batalov S."/>
            <person name="Forrest A.R."/>
            <person name="Zavolan M."/>
            <person name="Davis M.J."/>
            <person name="Wilming L.G."/>
            <person name="Aidinis V."/>
            <person name="Allen J.E."/>
            <person name="Ambesi-Impiombato A."/>
            <person name="Apweiler R."/>
            <person name="Aturaliya R.N."/>
            <person name="Bailey T.L."/>
            <person name="Bansal M."/>
            <person name="Baxter L."/>
            <person name="Beisel K.W."/>
            <person name="Bersano T."/>
            <person name="Bono H."/>
            <person name="Chalk A.M."/>
            <person name="Chiu K.P."/>
            <person name="Choudhary V."/>
            <person name="Christoffels A."/>
            <person name="Clutterbuck D.R."/>
            <person name="Crowe M.L."/>
            <person name="Dalla E."/>
            <person name="Dalrymple B.P."/>
            <person name="de Bono B."/>
            <person name="Della Gatta G."/>
            <person name="di Bernardo D."/>
            <person name="Down T."/>
            <person name="Engstrom P."/>
            <person name="Fagiolini M."/>
            <person name="Faulkner G."/>
            <person name="Fletcher C.F."/>
            <person name="Fukushima T."/>
            <person name="Furuno M."/>
            <person name="Futaki S."/>
            <person name="Gariboldi M."/>
            <person name="Georgii-Hemming P."/>
            <person name="Gingeras T.R."/>
            <person name="Gojobori T."/>
            <person name="Green R.E."/>
            <person name="Gustincich S."/>
            <person name="Harbers M."/>
            <person name="Hayashi Y."/>
            <person name="Hensch T.K."/>
            <person name="Hirokawa N."/>
            <person name="Hill D."/>
            <person name="Huminiecki L."/>
            <person name="Iacono M."/>
            <person name="Ikeo K."/>
            <person name="Iwama A."/>
            <person name="Ishikawa T."/>
            <person name="Jakt M."/>
            <person name="Kanapin A."/>
            <person name="Katoh M."/>
            <person name="Kawasawa Y."/>
            <person name="Kelso J."/>
            <person name="Kitamura H."/>
            <person name="Kitano H."/>
            <person name="Kollias G."/>
            <person name="Krishnan S.P."/>
            <person name="Kruger A."/>
            <person name="Kummerfeld S.K."/>
            <person name="Kurochkin I.V."/>
            <person name="Lareau L.F."/>
            <person name="Lazarevic D."/>
            <person name="Lipovich L."/>
            <person name="Liu J."/>
            <person name="Liuni S."/>
            <person name="McWilliam S."/>
            <person name="Madan Babu M."/>
            <person name="Madera M."/>
            <person name="Marchionni L."/>
            <person name="Matsuda H."/>
            <person name="Matsuzawa S."/>
            <person name="Miki H."/>
            <person name="Mignone F."/>
            <person name="Miyake S."/>
            <person name="Morris K."/>
            <person name="Mottagui-Tabar S."/>
            <person name="Mulder N."/>
            <person name="Nakano N."/>
            <person name="Nakauchi H."/>
            <person name="Ng P."/>
            <person name="Nilsson R."/>
            <person name="Nishiguchi S."/>
            <person name="Nishikawa S."/>
            <person name="Nori F."/>
            <person name="Ohara O."/>
            <person name="Okazaki Y."/>
            <person name="Orlando V."/>
            <person name="Pang K.C."/>
            <person name="Pavan W.J."/>
            <person name="Pavesi G."/>
            <person name="Pesole G."/>
            <person name="Petrovsky N."/>
            <person name="Piazza S."/>
            <person name="Reed J."/>
            <person name="Reid J.F."/>
            <person name="Ring B.Z."/>
            <person name="Ringwald M."/>
            <person name="Rost B."/>
            <person name="Ruan Y."/>
            <person name="Salzberg S.L."/>
            <person name="Sandelin A."/>
            <person name="Schneider C."/>
            <person name="Schoenbach C."/>
            <person name="Sekiguchi K."/>
            <person name="Semple C.A."/>
            <person name="Seno S."/>
            <person name="Sessa L."/>
            <person name="Sheng Y."/>
            <person name="Shibata Y."/>
            <person name="Shimada H."/>
            <person name="Shimada K."/>
            <person name="Silva D."/>
            <person name="Sinclair B."/>
            <person name="Sperling S."/>
            <person name="Stupka E."/>
            <person name="Sugiura K."/>
            <person name="Sultana R."/>
            <person name="Takenaka Y."/>
            <person name="Taki K."/>
            <person name="Tammoja K."/>
            <person name="Tan S.L."/>
            <person name="Tang S."/>
            <person name="Taylor M.S."/>
            <person name="Tegner J."/>
            <person name="Teichmann S.A."/>
            <person name="Ueda H.R."/>
            <person name="van Nimwegen E."/>
            <person name="Verardo R."/>
            <person name="Wei C.L."/>
            <person name="Yagi K."/>
            <person name="Yamanishi H."/>
            <person name="Zabarovsky E."/>
            <person name="Zhu S."/>
            <person name="Zimmer A."/>
            <person name="Hide W."/>
            <person name="Bult C."/>
            <person name="Grimmond S.M."/>
            <person name="Teasdale R.D."/>
            <person name="Liu E.T."/>
            <person name="Brusic V."/>
            <person name="Quackenbush J."/>
            <person name="Wahlestedt C."/>
            <person name="Mattick J.S."/>
            <person name="Hume D.A."/>
            <person name="Kai C."/>
            <person name="Sasaki D."/>
            <person name="Tomaru Y."/>
            <person name="Fukuda S."/>
            <person name="Kanamori-Katayama M."/>
            <person name="Suzuki M."/>
            <person name="Aoki J."/>
            <person name="Arakawa T."/>
            <person name="Iida J."/>
            <person name="Imamura K."/>
            <person name="Itoh M."/>
            <person name="Kato T."/>
            <person name="Kawaji H."/>
            <person name="Kawagashira N."/>
            <person name="Kawashima T."/>
            <person name="Kojima M."/>
            <person name="Kondo S."/>
            <person name="Konno H."/>
            <person name="Nakano K."/>
            <person name="Ninomiya N."/>
            <person name="Nishio T."/>
            <person name="Okada M."/>
            <person name="Plessy C."/>
            <person name="Shibata K."/>
            <person name="Shiraki T."/>
            <person name="Suzuki S."/>
            <person name="Tagami M."/>
            <person name="Waki K."/>
            <person name="Watahiki A."/>
            <person name="Okamura-Oho Y."/>
            <person name="Suzuki H."/>
            <person name="Kawai J."/>
            <person name="Hayashizaki Y."/>
        </authorList>
    </citation>
    <scope>NUCLEOTIDE SEQUENCE [LARGE SCALE MRNA]</scope>
    <source>
        <strain>C57BL/6J</strain>
        <tissue>Kidney</tissue>
        <tissue>Tongue</tissue>
    </source>
</reference>
<reference key="2">
    <citation type="journal article" date="2009" name="PLoS Biol.">
        <title>Lineage-specific biology revealed by a finished genome assembly of the mouse.</title>
        <authorList>
            <person name="Church D.M."/>
            <person name="Goodstadt L."/>
            <person name="Hillier L.W."/>
            <person name="Zody M.C."/>
            <person name="Goldstein S."/>
            <person name="She X."/>
            <person name="Bult C.J."/>
            <person name="Agarwala R."/>
            <person name="Cherry J.L."/>
            <person name="DiCuccio M."/>
            <person name="Hlavina W."/>
            <person name="Kapustin Y."/>
            <person name="Meric P."/>
            <person name="Maglott D."/>
            <person name="Birtle Z."/>
            <person name="Marques A.C."/>
            <person name="Graves T."/>
            <person name="Zhou S."/>
            <person name="Teague B."/>
            <person name="Potamousis K."/>
            <person name="Churas C."/>
            <person name="Place M."/>
            <person name="Herschleb J."/>
            <person name="Runnheim R."/>
            <person name="Forrest D."/>
            <person name="Amos-Landgraf J."/>
            <person name="Schwartz D.C."/>
            <person name="Cheng Z."/>
            <person name="Lindblad-Toh K."/>
            <person name="Eichler E.E."/>
            <person name="Ponting C.P."/>
        </authorList>
    </citation>
    <scope>NUCLEOTIDE SEQUENCE [LARGE SCALE GENOMIC DNA]</scope>
    <source>
        <strain>C57BL/6J</strain>
    </source>
</reference>
<reference key="3">
    <citation type="journal article" date="2004" name="Genome Res.">
        <title>The status, quality, and expansion of the NIH full-length cDNA project: the Mammalian Gene Collection (MGC).</title>
        <authorList>
            <consortium name="The MGC Project Team"/>
        </authorList>
    </citation>
    <scope>NUCLEOTIDE SEQUENCE [LARGE SCALE MRNA]</scope>
    <source>
        <strain>FVB/N</strain>
        <tissue>Mammary tumor</tissue>
    </source>
</reference>
<reference key="4">
    <citation type="journal article" date="2006" name="J. Biol. Chem.">
        <title>Protein phosphatase 6 subunit with conserved Sit4-associated protein domain targets IkappaBepsilon.</title>
        <authorList>
            <person name="Stefansson B."/>
            <person name="Brautigan D.L."/>
        </authorList>
    </citation>
    <scope>TISSUE SPECIFICITY</scope>
</reference>
<reference key="5">
    <citation type="journal article" date="2010" name="Cell">
        <title>A tissue-specific atlas of mouse protein phosphorylation and expression.</title>
        <authorList>
            <person name="Huttlin E.L."/>
            <person name="Jedrychowski M.P."/>
            <person name="Elias J.E."/>
            <person name="Goswami T."/>
            <person name="Rad R."/>
            <person name="Beausoleil S.A."/>
            <person name="Villen J."/>
            <person name="Haas W."/>
            <person name="Sowa M.E."/>
            <person name="Gygi S.P."/>
        </authorList>
    </citation>
    <scope>IDENTIFICATION BY MASS SPECTROMETRY [LARGE SCALE ANALYSIS]</scope>
    <source>
        <tissue>Brain</tissue>
        <tissue>Heart</tissue>
        <tissue>Kidney</tissue>
        <tissue>Liver</tissue>
        <tissue>Lung</tissue>
        <tissue>Pancreas</tissue>
        <tissue>Spleen</tissue>
        <tissue>Testis</tissue>
    </source>
</reference>
<reference key="6">
    <citation type="journal article" date="2016" name="Mech. Dev.">
        <title>The protein phosphatase 6 catalytic subunit (Ppp6c) is indispensable for proper post-implantation embryogenesis.</title>
        <authorList>
            <person name="Ogoh H."/>
            <person name="Tanuma N."/>
            <person name="Matsui Y."/>
            <person name="Hayakawa N."/>
            <person name="Inagaki A."/>
            <person name="Sumiyoshi M."/>
            <person name="Momoi Y."/>
            <person name="Kishimoto A."/>
            <person name="Suzuki M."/>
            <person name="Sasaki N."/>
            <person name="Ohuchi T."/>
            <person name="Nomura M."/>
            <person name="Teruya Y."/>
            <person name="Yasuda K."/>
            <person name="Watanabe T."/>
            <person name="Shima H."/>
        </authorList>
    </citation>
    <scope>DISRUPTION PHENOTYPE</scope>
</reference>
<reference key="7">
    <citation type="journal article" date="2020" name="Protein Cell">
        <title>Dephosphorylation of cGAS by PPP6C impairs its substrate binding activity and innate antiviral response.</title>
        <authorList>
            <person name="Li M."/>
            <person name="Shu H.B."/>
        </authorList>
    </citation>
    <scope>FUNCTION</scope>
    <scope>CATALYTIC ACTIVITY</scope>
</reference>
<evidence type="ECO:0000250" key="1">
    <source>
        <dbReference type="UniProtKB" id="O00743"/>
    </source>
</evidence>
<evidence type="ECO:0000250" key="2">
    <source>
        <dbReference type="UniProtKB" id="P36873"/>
    </source>
</evidence>
<evidence type="ECO:0000269" key="3">
    <source>
    </source>
</evidence>
<evidence type="ECO:0000269" key="4">
    <source>
    </source>
</evidence>
<evidence type="ECO:0000269" key="5">
    <source>
    </source>
</evidence>
<evidence type="ECO:0000303" key="6">
    <source>
    </source>
</evidence>
<evidence type="ECO:0000305" key="7"/>
<evidence type="ECO:0000312" key="8">
    <source>
        <dbReference type="MGI" id="MGI:1915107"/>
    </source>
</evidence>
<sequence length="305" mass="35159">MAPLDLDKYVEIARQCKYLPENDLKRLCDYVCDLLLEESNVQPVSTPVTVCGDIHGQFYDLCELFRTGGQVPDTNYIFMGDFVDRGYYSLETFTYLLALKAKWPDRITLLRGNHESRQITQVYGFYDECQTKYGNANAWRYCTKVFDMLTVAALIDEQILCVHGGLSPDIKTLDQIRTIERNQEIPHKGAFCDLVWSDPEDVDTWAISPRGAGWLFGAKVTNEFVHINNLKLICRAHQLVHEGYKFMFDEKLVTVWSAPNYCYRCGNIASIMVFKDVNTREPKLFRAVPDSERVIPPRTTTPYFL</sequence>
<dbReference type="EC" id="3.1.3.16" evidence="5"/>
<dbReference type="EMBL" id="AK002764">
    <property type="protein sequence ID" value="BAB22339.1"/>
    <property type="molecule type" value="mRNA"/>
</dbReference>
<dbReference type="EMBL" id="AK009104">
    <property type="protein sequence ID" value="BAB26073.1"/>
    <property type="molecule type" value="mRNA"/>
</dbReference>
<dbReference type="EMBL" id="AL928639">
    <property type="status" value="NOT_ANNOTATED_CDS"/>
    <property type="molecule type" value="Genomic_DNA"/>
</dbReference>
<dbReference type="EMBL" id="BC002223">
    <property type="protein sequence ID" value="AAH02223.1"/>
    <property type="molecule type" value="mRNA"/>
</dbReference>
<dbReference type="CCDS" id="CCDS16017.1"/>
<dbReference type="RefSeq" id="NP_077171.1">
    <property type="nucleotide sequence ID" value="NM_024209.3"/>
</dbReference>
<dbReference type="SMR" id="Q9CQR6"/>
<dbReference type="BioGRID" id="212485">
    <property type="interactions" value="50"/>
</dbReference>
<dbReference type="CORUM" id="Q9CQR6"/>
<dbReference type="FunCoup" id="Q9CQR6">
    <property type="interactions" value="4302"/>
</dbReference>
<dbReference type="IntAct" id="Q9CQR6">
    <property type="interactions" value="38"/>
</dbReference>
<dbReference type="MINT" id="Q9CQR6"/>
<dbReference type="STRING" id="10090.ENSMUSP00000028087"/>
<dbReference type="GlyGen" id="Q9CQR6">
    <property type="glycosylation" value="3 sites, 1 O-linked glycan (3 sites)"/>
</dbReference>
<dbReference type="iPTMnet" id="Q9CQR6"/>
<dbReference type="PhosphoSitePlus" id="Q9CQR6"/>
<dbReference type="SwissPalm" id="Q9CQR6"/>
<dbReference type="jPOST" id="Q9CQR6"/>
<dbReference type="PaxDb" id="10090-ENSMUSP00000028087"/>
<dbReference type="PeptideAtlas" id="Q9CQR6"/>
<dbReference type="ProteomicsDB" id="291720"/>
<dbReference type="Pumba" id="Q9CQR6"/>
<dbReference type="Antibodypedia" id="30522">
    <property type="antibodies" value="286 antibodies from 32 providers"/>
</dbReference>
<dbReference type="DNASU" id="67857"/>
<dbReference type="Ensembl" id="ENSMUST00000028087.6">
    <property type="protein sequence ID" value="ENSMUSP00000028087.4"/>
    <property type="gene ID" value="ENSMUSG00000026753.6"/>
</dbReference>
<dbReference type="GeneID" id="67857"/>
<dbReference type="KEGG" id="mmu:67857"/>
<dbReference type="UCSC" id="uc008joi.1">
    <property type="organism name" value="mouse"/>
</dbReference>
<dbReference type="AGR" id="MGI:1915107"/>
<dbReference type="CTD" id="5537"/>
<dbReference type="MGI" id="MGI:1915107">
    <property type="gene designation" value="Ppp6c"/>
</dbReference>
<dbReference type="VEuPathDB" id="HostDB:ENSMUSG00000026753"/>
<dbReference type="eggNOG" id="KOG0373">
    <property type="taxonomic scope" value="Eukaryota"/>
</dbReference>
<dbReference type="GeneTree" id="ENSGT00550000074961"/>
<dbReference type="HOGENOM" id="CLU_004962_8_1_1"/>
<dbReference type="InParanoid" id="Q9CQR6"/>
<dbReference type="OMA" id="MCLKVKY"/>
<dbReference type="OrthoDB" id="1930084at2759"/>
<dbReference type="PhylomeDB" id="Q9CQR6"/>
<dbReference type="TreeFam" id="TF105563"/>
<dbReference type="Reactome" id="R-MMU-171319">
    <property type="pathway name" value="Telomere Extension By Telomerase"/>
</dbReference>
<dbReference type="Reactome" id="R-MMU-204005">
    <property type="pathway name" value="COPII-mediated vesicle transport"/>
</dbReference>
<dbReference type="BioGRID-ORCS" id="67857">
    <property type="hits" value="25 hits in 85 CRISPR screens"/>
</dbReference>
<dbReference type="ChiTaRS" id="Ppp6c">
    <property type="organism name" value="mouse"/>
</dbReference>
<dbReference type="PRO" id="PR:Q9CQR6"/>
<dbReference type="Proteomes" id="UP000000589">
    <property type="component" value="Chromosome 2"/>
</dbReference>
<dbReference type="RNAct" id="Q9CQR6">
    <property type="molecule type" value="protein"/>
</dbReference>
<dbReference type="Bgee" id="ENSMUSG00000026753">
    <property type="expression patterns" value="Expressed in metanephric loop of Henle and 274 other cell types or tissues"/>
</dbReference>
<dbReference type="ExpressionAtlas" id="Q9CQR6">
    <property type="expression patterns" value="baseline and differential"/>
</dbReference>
<dbReference type="GO" id="GO:0005829">
    <property type="term" value="C:cytosol"/>
    <property type="evidence" value="ECO:0000266"/>
    <property type="project" value="MGI"/>
</dbReference>
<dbReference type="GO" id="GO:0005739">
    <property type="term" value="C:mitochondrion"/>
    <property type="evidence" value="ECO:0007669"/>
    <property type="project" value="UniProtKB-SubCell"/>
</dbReference>
<dbReference type="GO" id="GO:0046872">
    <property type="term" value="F:metal ion binding"/>
    <property type="evidence" value="ECO:0007669"/>
    <property type="project" value="UniProtKB-KW"/>
</dbReference>
<dbReference type="GO" id="GO:0004722">
    <property type="term" value="F:protein serine/threonine phosphatase activity"/>
    <property type="evidence" value="ECO:0000314"/>
    <property type="project" value="UniProtKB"/>
</dbReference>
<dbReference type="GO" id="GO:0045087">
    <property type="term" value="P:innate immune response"/>
    <property type="evidence" value="ECO:0007669"/>
    <property type="project" value="UniProtKB-KW"/>
</dbReference>
<dbReference type="GO" id="GO:0160049">
    <property type="term" value="P:negative regulation of cGAS/STING signaling pathway"/>
    <property type="evidence" value="ECO:0007669"/>
    <property type="project" value="Ensembl"/>
</dbReference>
<dbReference type="CDD" id="cd07415">
    <property type="entry name" value="MPP_PP2A_PP4_PP6"/>
    <property type="match status" value="1"/>
</dbReference>
<dbReference type="FunFam" id="3.60.21.10:FF:000005">
    <property type="entry name" value="Serine/threonine-protein phosphatase"/>
    <property type="match status" value="1"/>
</dbReference>
<dbReference type="Gene3D" id="3.60.21.10">
    <property type="match status" value="1"/>
</dbReference>
<dbReference type="InterPro" id="IPR004843">
    <property type="entry name" value="Calcineurin-like_PHP_ApaH"/>
</dbReference>
<dbReference type="InterPro" id="IPR029052">
    <property type="entry name" value="Metallo-depent_PP-like"/>
</dbReference>
<dbReference type="InterPro" id="IPR047129">
    <property type="entry name" value="PPA2-like"/>
</dbReference>
<dbReference type="InterPro" id="IPR006186">
    <property type="entry name" value="Ser/Thr-sp_prot-phosphatase"/>
</dbReference>
<dbReference type="PANTHER" id="PTHR45619">
    <property type="entry name" value="SERINE/THREONINE-PROTEIN PHOSPHATASE PP2A-RELATED"/>
    <property type="match status" value="1"/>
</dbReference>
<dbReference type="Pfam" id="PF00149">
    <property type="entry name" value="Metallophos"/>
    <property type="match status" value="1"/>
</dbReference>
<dbReference type="PRINTS" id="PR00114">
    <property type="entry name" value="STPHPHTASE"/>
</dbReference>
<dbReference type="SMART" id="SM00156">
    <property type="entry name" value="PP2Ac"/>
    <property type="match status" value="1"/>
</dbReference>
<dbReference type="SUPFAM" id="SSF56300">
    <property type="entry name" value="Metallo-dependent phosphatases"/>
    <property type="match status" value="1"/>
</dbReference>
<dbReference type="PROSITE" id="PS00125">
    <property type="entry name" value="SER_THR_PHOSPHATASE"/>
    <property type="match status" value="1"/>
</dbReference>
<feature type="chain" id="PRO_0000058878" description="Serine/threonine-protein phosphatase 6 catalytic subunit">
    <location>
        <begin position="1"/>
        <end position="305"/>
    </location>
</feature>
<feature type="active site" description="Proton donor" evidence="2">
    <location>
        <position position="114"/>
    </location>
</feature>
<feature type="binding site" evidence="2">
    <location>
        <position position="53"/>
    </location>
    <ligand>
        <name>Mn(2+)</name>
        <dbReference type="ChEBI" id="CHEBI:29035"/>
        <label>1</label>
    </ligand>
</feature>
<feature type="binding site" evidence="2">
    <location>
        <position position="55"/>
    </location>
    <ligand>
        <name>Mn(2+)</name>
        <dbReference type="ChEBI" id="CHEBI:29035"/>
        <label>1</label>
    </ligand>
</feature>
<feature type="binding site" evidence="2">
    <location>
        <position position="81"/>
    </location>
    <ligand>
        <name>Mn(2+)</name>
        <dbReference type="ChEBI" id="CHEBI:29035"/>
        <label>1</label>
    </ligand>
</feature>
<feature type="binding site" evidence="2">
    <location>
        <position position="81"/>
    </location>
    <ligand>
        <name>Mn(2+)</name>
        <dbReference type="ChEBI" id="CHEBI:29035"/>
        <label>2</label>
    </ligand>
</feature>
<feature type="binding site" evidence="2">
    <location>
        <position position="113"/>
    </location>
    <ligand>
        <name>Mn(2+)</name>
        <dbReference type="ChEBI" id="CHEBI:29035"/>
        <label>2</label>
    </ligand>
</feature>
<feature type="binding site" evidence="2">
    <location>
        <position position="163"/>
    </location>
    <ligand>
        <name>Mn(2+)</name>
        <dbReference type="ChEBI" id="CHEBI:29035"/>
        <label>2</label>
    </ligand>
</feature>
<feature type="binding site" evidence="2">
    <location>
        <position position="237"/>
    </location>
    <ligand>
        <name>Mn(2+)</name>
        <dbReference type="ChEBI" id="CHEBI:29035"/>
        <label>2</label>
    </ligand>
</feature>
<feature type="modified residue" description="N-acetylmethionine" evidence="1">
    <location>
        <position position="1"/>
    </location>
</feature>
<organism>
    <name type="scientific">Mus musculus</name>
    <name type="common">Mouse</name>
    <dbReference type="NCBI Taxonomy" id="10090"/>
    <lineage>
        <taxon>Eukaryota</taxon>
        <taxon>Metazoa</taxon>
        <taxon>Chordata</taxon>
        <taxon>Craniata</taxon>
        <taxon>Vertebrata</taxon>
        <taxon>Euteleostomi</taxon>
        <taxon>Mammalia</taxon>
        <taxon>Eutheria</taxon>
        <taxon>Euarchontoglires</taxon>
        <taxon>Glires</taxon>
        <taxon>Rodentia</taxon>
        <taxon>Myomorpha</taxon>
        <taxon>Muroidea</taxon>
        <taxon>Muridae</taxon>
        <taxon>Murinae</taxon>
        <taxon>Mus</taxon>
        <taxon>Mus</taxon>
    </lineage>
</organism>
<proteinExistence type="evidence at protein level"/>
<gene>
    <name evidence="6 8" type="primary">Ppp6c</name>
</gene>